<comment type="subcellular location">
    <subcellularLocation>
        <location evidence="2">Cell membrane</location>
        <topology evidence="2">Multi-pass membrane protein</topology>
    </subcellularLocation>
</comment>
<comment type="similarity">
    <text evidence="2">Belongs to the UPF0324 family.</text>
</comment>
<accession>Q8EL25</accession>
<protein>
    <recommendedName>
        <fullName>UPF0324 membrane protein OB3406</fullName>
    </recommendedName>
</protein>
<gene>
    <name type="ordered locus">OB3406</name>
</gene>
<dbReference type="EMBL" id="BA000028">
    <property type="protein sequence ID" value="BAC15362.1"/>
    <property type="molecule type" value="Genomic_DNA"/>
</dbReference>
<dbReference type="RefSeq" id="WP_011067804.1">
    <property type="nucleotide sequence ID" value="NC_004193.1"/>
</dbReference>
<dbReference type="KEGG" id="oih:OB3406"/>
<dbReference type="eggNOG" id="COG2855">
    <property type="taxonomic scope" value="Bacteria"/>
</dbReference>
<dbReference type="HOGENOM" id="CLU_033541_0_1_9"/>
<dbReference type="OrthoDB" id="9811391at2"/>
<dbReference type="PhylomeDB" id="Q8EL25"/>
<dbReference type="Proteomes" id="UP000000822">
    <property type="component" value="Chromosome"/>
</dbReference>
<dbReference type="GO" id="GO:0005886">
    <property type="term" value="C:plasma membrane"/>
    <property type="evidence" value="ECO:0007669"/>
    <property type="project" value="UniProtKB-SubCell"/>
</dbReference>
<dbReference type="InterPro" id="IPR018383">
    <property type="entry name" value="UPF0324_pro"/>
</dbReference>
<dbReference type="PANTHER" id="PTHR30106">
    <property type="entry name" value="INNER MEMBRANE PROTEIN YEIH-RELATED"/>
    <property type="match status" value="1"/>
</dbReference>
<dbReference type="PANTHER" id="PTHR30106:SF2">
    <property type="entry name" value="UPF0324 INNER MEMBRANE PROTEIN YEIH"/>
    <property type="match status" value="1"/>
</dbReference>
<dbReference type="Pfam" id="PF03601">
    <property type="entry name" value="Cons_hypoth698"/>
    <property type="match status" value="1"/>
</dbReference>
<keyword id="KW-1003">Cell membrane</keyword>
<keyword id="KW-0472">Membrane</keyword>
<keyword id="KW-1185">Reference proteome</keyword>
<keyword id="KW-0812">Transmembrane</keyword>
<keyword id="KW-1133">Transmembrane helix</keyword>
<organism>
    <name type="scientific">Oceanobacillus iheyensis (strain DSM 14371 / CIP 107618 / JCM 11309 / KCTC 3954 / HTE831)</name>
    <dbReference type="NCBI Taxonomy" id="221109"/>
    <lineage>
        <taxon>Bacteria</taxon>
        <taxon>Bacillati</taxon>
        <taxon>Bacillota</taxon>
        <taxon>Bacilli</taxon>
        <taxon>Bacillales</taxon>
        <taxon>Bacillaceae</taxon>
        <taxon>Oceanobacillus</taxon>
    </lineage>
</organism>
<evidence type="ECO:0000255" key="1"/>
<evidence type="ECO:0000305" key="2"/>
<name>Y3406_OCEIH</name>
<feature type="chain" id="PRO_0000157432" description="UPF0324 membrane protein OB3406">
    <location>
        <begin position="1"/>
        <end position="340"/>
    </location>
</feature>
<feature type="transmembrane region" description="Helical" evidence="1">
    <location>
        <begin position="12"/>
        <end position="31"/>
    </location>
</feature>
<feature type="transmembrane region" description="Helical" evidence="1">
    <location>
        <begin position="36"/>
        <end position="58"/>
    </location>
</feature>
<feature type="transmembrane region" description="Helical" evidence="1">
    <location>
        <begin position="94"/>
        <end position="116"/>
    </location>
</feature>
<feature type="transmembrane region" description="Helical" evidence="1">
    <location>
        <begin position="126"/>
        <end position="148"/>
    </location>
</feature>
<feature type="transmembrane region" description="Helical" evidence="1">
    <location>
        <begin position="155"/>
        <end position="177"/>
    </location>
</feature>
<feature type="transmembrane region" description="Helical" evidence="1">
    <location>
        <begin position="215"/>
        <end position="237"/>
    </location>
</feature>
<feature type="transmembrane region" description="Helical" evidence="1">
    <location>
        <begin position="257"/>
        <end position="276"/>
    </location>
</feature>
<feature type="transmembrane region" description="Helical" evidence="1">
    <location>
        <begin position="281"/>
        <end position="303"/>
    </location>
</feature>
<feature type="transmembrane region" description="Helical" evidence="1">
    <location>
        <begin position="315"/>
        <end position="337"/>
    </location>
</feature>
<sequence>MQHVHPDDKTRSFYTGIGITLAIALVAGVLCKIPYLDIMGQLVLAIMIGMIWGHTIGLKNSHRSGVQFSSKKLLRAGIILLGLRLNLSAMYDAGLHAFLYAGLLLTVALVTVYSLARLFRVNKTLSILTACGTAICGAAAIVAIAPLVKAKESTTAVSVAVIAVLGTMFTLIYTMMYPFLPFTDYQYGIFAGGTLHEIAHAVAASTAGGEEAENIAIVVKLTRVALLVPVAILIGIYMKKREPQNNKQRFSLKTLPIPWFIFGFLAMSAVNTIGFLPESVVNLLISLAYLLLSMAMAGLGLNVEFQAFKKFGFHVFFAGLLGTLILIGCGFGLIYVMGLG</sequence>
<proteinExistence type="inferred from homology"/>
<reference key="1">
    <citation type="journal article" date="2002" name="Nucleic Acids Res.">
        <title>Genome sequence of Oceanobacillus iheyensis isolated from the Iheya Ridge and its unexpected adaptive capabilities to extreme environments.</title>
        <authorList>
            <person name="Takami H."/>
            <person name="Takaki Y."/>
            <person name="Uchiyama I."/>
        </authorList>
    </citation>
    <scope>NUCLEOTIDE SEQUENCE [LARGE SCALE GENOMIC DNA]</scope>
    <source>
        <strain>DSM 14371 / CIP 107618 / JCM 11309 / KCTC 3954 / HTE831</strain>
    </source>
</reference>